<comment type="function">
    <text evidence="1">Catalyzes the thiamine diphosphate-dependent decarboxylation of 2-oxoglutarate and the subsequent addition of the resulting succinic semialdehyde-thiamine pyrophosphate anion to isochorismate to yield 2-succinyl-5-enolpyruvyl-6-hydroxy-3-cyclohexene-1-carboxylate (SEPHCHC).</text>
</comment>
<comment type="catalytic activity">
    <reaction evidence="1">
        <text>isochorismate + 2-oxoglutarate + H(+) = 5-enolpyruvoyl-6-hydroxy-2-succinyl-cyclohex-3-ene-1-carboxylate + CO2</text>
        <dbReference type="Rhea" id="RHEA:25593"/>
        <dbReference type="ChEBI" id="CHEBI:15378"/>
        <dbReference type="ChEBI" id="CHEBI:16526"/>
        <dbReference type="ChEBI" id="CHEBI:16810"/>
        <dbReference type="ChEBI" id="CHEBI:29780"/>
        <dbReference type="ChEBI" id="CHEBI:58818"/>
        <dbReference type="EC" id="2.2.1.9"/>
    </reaction>
</comment>
<comment type="cofactor">
    <cofactor evidence="1">
        <name>Mg(2+)</name>
        <dbReference type="ChEBI" id="CHEBI:18420"/>
    </cofactor>
    <cofactor evidence="1">
        <name>Mn(2+)</name>
        <dbReference type="ChEBI" id="CHEBI:29035"/>
    </cofactor>
</comment>
<comment type="cofactor">
    <cofactor evidence="1">
        <name>thiamine diphosphate</name>
        <dbReference type="ChEBI" id="CHEBI:58937"/>
    </cofactor>
    <text evidence="1">Binds 1 thiamine pyrophosphate per subunit.</text>
</comment>
<comment type="pathway">
    <text evidence="1">Quinol/quinone metabolism; 1,4-dihydroxy-2-naphthoate biosynthesis; 1,4-dihydroxy-2-naphthoate from chorismate: step 2/7.</text>
</comment>
<comment type="pathway">
    <text evidence="1">Quinol/quinone metabolism; menaquinone biosynthesis.</text>
</comment>
<comment type="subunit">
    <text evidence="1">Homodimer.</text>
</comment>
<comment type="similarity">
    <text evidence="1">Belongs to the TPP enzyme family. MenD subfamily.</text>
</comment>
<organism>
    <name type="scientific">Bacillus pumilus (strain SAFR-032)</name>
    <dbReference type="NCBI Taxonomy" id="315750"/>
    <lineage>
        <taxon>Bacteria</taxon>
        <taxon>Bacillati</taxon>
        <taxon>Bacillota</taxon>
        <taxon>Bacilli</taxon>
        <taxon>Bacillales</taxon>
        <taxon>Bacillaceae</taxon>
        <taxon>Bacillus</taxon>
    </lineage>
</organism>
<gene>
    <name evidence="1" type="primary">menD</name>
    <name type="ordered locus">BPUM_2718</name>
</gene>
<evidence type="ECO:0000255" key="1">
    <source>
        <dbReference type="HAMAP-Rule" id="MF_01659"/>
    </source>
</evidence>
<keyword id="KW-0460">Magnesium</keyword>
<keyword id="KW-0464">Manganese</keyword>
<keyword id="KW-0474">Menaquinone biosynthesis</keyword>
<keyword id="KW-0479">Metal-binding</keyword>
<keyword id="KW-0786">Thiamine pyrophosphate</keyword>
<keyword id="KW-0808">Transferase</keyword>
<accession>A8FGK9</accession>
<feature type="chain" id="PRO_0000341710" description="2-succinyl-5-enolpyruvyl-6-hydroxy-3-cyclohexene-1-carboxylate synthase">
    <location>
        <begin position="1"/>
        <end position="580"/>
    </location>
</feature>
<proteinExistence type="inferred from homology"/>
<protein>
    <recommendedName>
        <fullName evidence="1">2-succinyl-5-enolpyruvyl-6-hydroxy-3-cyclohexene-1-carboxylate synthase</fullName>
        <shortName evidence="1">SEPHCHC synthase</shortName>
        <ecNumber evidence="1">2.2.1.9</ecNumber>
    </recommendedName>
    <alternativeName>
        <fullName evidence="1">Menaquinone biosynthesis protein MenD</fullName>
    </alternativeName>
</protein>
<sequence>MNNQIMTTYIGRLMDEFVQGGVQEAVVCPGSRSTPLAMLALAHQDINVHVLVDERSAAFYALGLAKASQTPVLLICTSGTAAANFYPAIVEAHYSRVPLIVLTADRPHELREVGAPQAIDQQFLFGKFVKWFTDLALPEESQMMLRYVQTAAARANHMSMQEPKGPVQINVPLREPLLPDLSIHPFDREETDRKKVLATGQAYPNDDALSEIVTVMNRSKKGLIVCGELHTQKEKEAVLRLSKDLHLPILADPLSHLRNGHEHAELIIDAYDSLLKDEALQQHLLPDMVIRFGPMPVSKPLFKWLEKHAEVNQIVVDAAGGFRDPGLSASYIIESDVAAFVDEVVNRADQREDTSFLNRWQHANSSFRTHASHYSDEDLSFEGNVYRQLQHLLPKESVLFIGNSMPIRDVDTFFEAQSKPFRMMANRGANGIDGVVSTALGTYAALKQPVTLVIGDLSFYHDMNGLLAAKLMDIPLTVVLLNNDGGGIFSFLPQASEEPYYEKLFGTPTGLNFEYASKLYGGTYSKPSTKQEFHDVYKAHIEEPGLHLIEIETDRHSRVSKHRQMMDDILEEVKKECLLS</sequence>
<name>MEND_BACP2</name>
<reference key="1">
    <citation type="journal article" date="2007" name="PLoS ONE">
        <title>Paradoxical DNA repair and peroxide resistance gene conservation in Bacillus pumilus SAFR-032.</title>
        <authorList>
            <person name="Gioia J."/>
            <person name="Yerrapragada S."/>
            <person name="Qin X."/>
            <person name="Jiang H."/>
            <person name="Igboeli O.C."/>
            <person name="Muzny D."/>
            <person name="Dugan-Rocha S."/>
            <person name="Ding Y."/>
            <person name="Hawes A."/>
            <person name="Liu W."/>
            <person name="Perez L."/>
            <person name="Kovar C."/>
            <person name="Dinh H."/>
            <person name="Lee S."/>
            <person name="Nazareth L."/>
            <person name="Blyth P."/>
            <person name="Holder M."/>
            <person name="Buhay C."/>
            <person name="Tirumalai M.R."/>
            <person name="Liu Y."/>
            <person name="Dasgupta I."/>
            <person name="Bokhetache L."/>
            <person name="Fujita M."/>
            <person name="Karouia F."/>
            <person name="Eswara Moorthy P."/>
            <person name="Siefert J."/>
            <person name="Uzman A."/>
            <person name="Buzumbo P."/>
            <person name="Verma A."/>
            <person name="Zwiya H."/>
            <person name="McWilliams B.D."/>
            <person name="Olowu A."/>
            <person name="Clinkenbeard K.D."/>
            <person name="Newcombe D."/>
            <person name="Golebiewski L."/>
            <person name="Petrosino J.F."/>
            <person name="Nicholson W.L."/>
            <person name="Fox G.E."/>
            <person name="Venkateswaran K."/>
            <person name="Highlander S.K."/>
            <person name="Weinstock G.M."/>
        </authorList>
    </citation>
    <scope>NUCLEOTIDE SEQUENCE [LARGE SCALE GENOMIC DNA]</scope>
    <source>
        <strain>SAFR-032</strain>
    </source>
</reference>
<dbReference type="EC" id="2.2.1.9" evidence="1"/>
<dbReference type="EMBL" id="CP000813">
    <property type="protein sequence ID" value="ABV63376.1"/>
    <property type="molecule type" value="Genomic_DNA"/>
</dbReference>
<dbReference type="RefSeq" id="WP_012011003.1">
    <property type="nucleotide sequence ID" value="NC_009848.4"/>
</dbReference>
<dbReference type="SMR" id="A8FGK9"/>
<dbReference type="STRING" id="315750.BPUM_2718"/>
<dbReference type="GeneID" id="5621983"/>
<dbReference type="KEGG" id="bpu:BPUM_2718"/>
<dbReference type="eggNOG" id="COG1165">
    <property type="taxonomic scope" value="Bacteria"/>
</dbReference>
<dbReference type="HOGENOM" id="CLU_006051_3_0_9"/>
<dbReference type="OrthoDB" id="9791859at2"/>
<dbReference type="UniPathway" id="UPA00079"/>
<dbReference type="UniPathway" id="UPA01057">
    <property type="reaction ID" value="UER00164"/>
</dbReference>
<dbReference type="Proteomes" id="UP000001355">
    <property type="component" value="Chromosome"/>
</dbReference>
<dbReference type="GO" id="GO:0070204">
    <property type="term" value="F:2-succinyl-5-enolpyruvyl-6-hydroxy-3-cyclohexene-1-carboxylic-acid synthase activity"/>
    <property type="evidence" value="ECO:0007669"/>
    <property type="project" value="UniProtKB-UniRule"/>
</dbReference>
<dbReference type="GO" id="GO:0000287">
    <property type="term" value="F:magnesium ion binding"/>
    <property type="evidence" value="ECO:0007669"/>
    <property type="project" value="UniProtKB-UniRule"/>
</dbReference>
<dbReference type="GO" id="GO:0030145">
    <property type="term" value="F:manganese ion binding"/>
    <property type="evidence" value="ECO:0007669"/>
    <property type="project" value="UniProtKB-UniRule"/>
</dbReference>
<dbReference type="GO" id="GO:0030976">
    <property type="term" value="F:thiamine pyrophosphate binding"/>
    <property type="evidence" value="ECO:0007669"/>
    <property type="project" value="UniProtKB-UniRule"/>
</dbReference>
<dbReference type="GO" id="GO:0009234">
    <property type="term" value="P:menaquinone biosynthetic process"/>
    <property type="evidence" value="ECO:0007669"/>
    <property type="project" value="UniProtKB-UniRule"/>
</dbReference>
<dbReference type="CDD" id="cd07037">
    <property type="entry name" value="TPP_PYR_MenD"/>
    <property type="match status" value="1"/>
</dbReference>
<dbReference type="CDD" id="cd02009">
    <property type="entry name" value="TPP_SHCHC_synthase"/>
    <property type="match status" value="1"/>
</dbReference>
<dbReference type="Gene3D" id="3.40.50.970">
    <property type="match status" value="2"/>
</dbReference>
<dbReference type="Gene3D" id="3.40.50.1220">
    <property type="entry name" value="TPP-binding domain"/>
    <property type="match status" value="1"/>
</dbReference>
<dbReference type="HAMAP" id="MF_01659">
    <property type="entry name" value="MenD"/>
    <property type="match status" value="1"/>
</dbReference>
<dbReference type="InterPro" id="IPR029035">
    <property type="entry name" value="DHS-like_NAD/FAD-binding_dom"/>
</dbReference>
<dbReference type="InterPro" id="IPR004433">
    <property type="entry name" value="MenaQ_synth_MenD"/>
</dbReference>
<dbReference type="InterPro" id="IPR032264">
    <property type="entry name" value="MenD_middle"/>
</dbReference>
<dbReference type="InterPro" id="IPR029061">
    <property type="entry name" value="THDP-binding"/>
</dbReference>
<dbReference type="InterPro" id="IPR012001">
    <property type="entry name" value="Thiamin_PyroP_enz_TPP-bd_dom"/>
</dbReference>
<dbReference type="InterPro" id="IPR011766">
    <property type="entry name" value="TPP_enzyme_TPP-bd"/>
</dbReference>
<dbReference type="NCBIfam" id="TIGR00173">
    <property type="entry name" value="menD"/>
    <property type="match status" value="1"/>
</dbReference>
<dbReference type="PANTHER" id="PTHR42916">
    <property type="entry name" value="2-SUCCINYL-5-ENOLPYRUVYL-6-HYDROXY-3-CYCLOHEXENE-1-CARBOXYLATE SYNTHASE"/>
    <property type="match status" value="1"/>
</dbReference>
<dbReference type="PANTHER" id="PTHR42916:SF1">
    <property type="entry name" value="PROTEIN PHYLLO, CHLOROPLASTIC"/>
    <property type="match status" value="1"/>
</dbReference>
<dbReference type="Pfam" id="PF02775">
    <property type="entry name" value="TPP_enzyme_C"/>
    <property type="match status" value="1"/>
</dbReference>
<dbReference type="Pfam" id="PF16582">
    <property type="entry name" value="TPP_enzyme_M_2"/>
    <property type="match status" value="1"/>
</dbReference>
<dbReference type="Pfam" id="PF02776">
    <property type="entry name" value="TPP_enzyme_N"/>
    <property type="match status" value="1"/>
</dbReference>
<dbReference type="PIRSF" id="PIRSF004983">
    <property type="entry name" value="MenD"/>
    <property type="match status" value="1"/>
</dbReference>
<dbReference type="SUPFAM" id="SSF52467">
    <property type="entry name" value="DHS-like NAD/FAD-binding domain"/>
    <property type="match status" value="1"/>
</dbReference>
<dbReference type="SUPFAM" id="SSF52518">
    <property type="entry name" value="Thiamin diphosphate-binding fold (THDP-binding)"/>
    <property type="match status" value="2"/>
</dbReference>